<accession>Q2FWD1</accession>
<organism>
    <name type="scientific">Staphylococcus aureus (strain NCTC 8325 / PS 47)</name>
    <dbReference type="NCBI Taxonomy" id="93061"/>
    <lineage>
        <taxon>Bacteria</taxon>
        <taxon>Bacillati</taxon>
        <taxon>Bacillota</taxon>
        <taxon>Bacilli</taxon>
        <taxon>Bacillales</taxon>
        <taxon>Staphylococcaceae</taxon>
        <taxon>Staphylococcus</taxon>
    </lineage>
</organism>
<feature type="chain" id="PRO_0000266225" description="CTP synthase">
    <location>
        <begin position="1"/>
        <end position="536"/>
    </location>
</feature>
<feature type="domain" description="Glutamine amidotransferase type-1" evidence="1">
    <location>
        <begin position="293"/>
        <end position="535"/>
    </location>
</feature>
<feature type="region of interest" description="Amidoligase domain" evidence="1">
    <location>
        <begin position="1"/>
        <end position="267"/>
    </location>
</feature>
<feature type="active site" description="Nucleophile; for glutamine hydrolysis" evidence="1">
    <location>
        <position position="382"/>
    </location>
</feature>
<feature type="active site" evidence="1">
    <location>
        <position position="508"/>
    </location>
</feature>
<feature type="active site" evidence="1">
    <location>
        <position position="510"/>
    </location>
</feature>
<feature type="binding site" evidence="1">
    <location>
        <position position="13"/>
    </location>
    <ligand>
        <name>CTP</name>
        <dbReference type="ChEBI" id="CHEBI:37563"/>
        <note>allosteric inhibitor</note>
    </ligand>
</feature>
<feature type="binding site" evidence="1">
    <location>
        <position position="13"/>
    </location>
    <ligand>
        <name>UTP</name>
        <dbReference type="ChEBI" id="CHEBI:46398"/>
    </ligand>
</feature>
<feature type="binding site" evidence="1">
    <location>
        <begin position="14"/>
        <end position="19"/>
    </location>
    <ligand>
        <name>ATP</name>
        <dbReference type="ChEBI" id="CHEBI:30616"/>
    </ligand>
</feature>
<feature type="binding site" evidence="1">
    <location>
        <position position="54"/>
    </location>
    <ligand>
        <name>L-glutamine</name>
        <dbReference type="ChEBI" id="CHEBI:58359"/>
    </ligand>
</feature>
<feature type="binding site" evidence="1">
    <location>
        <position position="71"/>
    </location>
    <ligand>
        <name>ATP</name>
        <dbReference type="ChEBI" id="CHEBI:30616"/>
    </ligand>
</feature>
<feature type="binding site" evidence="1">
    <location>
        <position position="71"/>
    </location>
    <ligand>
        <name>Mg(2+)</name>
        <dbReference type="ChEBI" id="CHEBI:18420"/>
    </ligand>
</feature>
<feature type="binding site" evidence="1">
    <location>
        <position position="141"/>
    </location>
    <ligand>
        <name>Mg(2+)</name>
        <dbReference type="ChEBI" id="CHEBI:18420"/>
    </ligand>
</feature>
<feature type="binding site" evidence="1">
    <location>
        <begin position="148"/>
        <end position="150"/>
    </location>
    <ligand>
        <name>CTP</name>
        <dbReference type="ChEBI" id="CHEBI:37563"/>
        <note>allosteric inhibitor</note>
    </ligand>
</feature>
<feature type="binding site" evidence="1">
    <location>
        <begin position="188"/>
        <end position="193"/>
    </location>
    <ligand>
        <name>CTP</name>
        <dbReference type="ChEBI" id="CHEBI:37563"/>
        <note>allosteric inhibitor</note>
    </ligand>
</feature>
<feature type="binding site" evidence="1">
    <location>
        <begin position="188"/>
        <end position="193"/>
    </location>
    <ligand>
        <name>UTP</name>
        <dbReference type="ChEBI" id="CHEBI:46398"/>
    </ligand>
</feature>
<feature type="binding site" evidence="1">
    <location>
        <position position="224"/>
    </location>
    <ligand>
        <name>CTP</name>
        <dbReference type="ChEBI" id="CHEBI:37563"/>
        <note>allosteric inhibitor</note>
    </ligand>
</feature>
<feature type="binding site" evidence="1">
    <location>
        <position position="224"/>
    </location>
    <ligand>
        <name>UTP</name>
        <dbReference type="ChEBI" id="CHEBI:46398"/>
    </ligand>
</feature>
<feature type="binding site" evidence="1">
    <location>
        <begin position="240"/>
        <end position="242"/>
    </location>
    <ligand>
        <name>ATP</name>
        <dbReference type="ChEBI" id="CHEBI:30616"/>
    </ligand>
</feature>
<feature type="binding site" evidence="1">
    <location>
        <position position="355"/>
    </location>
    <ligand>
        <name>L-glutamine</name>
        <dbReference type="ChEBI" id="CHEBI:58359"/>
    </ligand>
</feature>
<feature type="binding site" evidence="1">
    <location>
        <begin position="383"/>
        <end position="386"/>
    </location>
    <ligand>
        <name>L-glutamine</name>
        <dbReference type="ChEBI" id="CHEBI:58359"/>
    </ligand>
</feature>
<feature type="binding site" evidence="1">
    <location>
        <position position="406"/>
    </location>
    <ligand>
        <name>L-glutamine</name>
        <dbReference type="ChEBI" id="CHEBI:58359"/>
    </ligand>
</feature>
<feature type="binding site" evidence="1">
    <location>
        <position position="463"/>
    </location>
    <ligand>
        <name>L-glutamine</name>
        <dbReference type="ChEBI" id="CHEBI:58359"/>
    </ligand>
</feature>
<dbReference type="EC" id="6.3.4.2" evidence="1"/>
<dbReference type="EMBL" id="CP000253">
    <property type="protein sequence ID" value="ABD31399.1"/>
    <property type="molecule type" value="Genomic_DNA"/>
</dbReference>
<dbReference type="RefSeq" id="WP_000159963.1">
    <property type="nucleotide sequence ID" value="NZ_LS483365.1"/>
</dbReference>
<dbReference type="RefSeq" id="YP_500844.1">
    <property type="nucleotide sequence ID" value="NC_007795.1"/>
</dbReference>
<dbReference type="SMR" id="Q2FWD1"/>
<dbReference type="STRING" id="93061.SAOUHSC_02368"/>
<dbReference type="MEROPS" id="C26.964"/>
<dbReference type="PaxDb" id="1280-SAXN108_2372"/>
<dbReference type="GeneID" id="3919411"/>
<dbReference type="KEGG" id="sao:SAOUHSC_02368"/>
<dbReference type="PATRIC" id="fig|93061.5.peg.2145"/>
<dbReference type="eggNOG" id="COG0504">
    <property type="taxonomic scope" value="Bacteria"/>
</dbReference>
<dbReference type="HOGENOM" id="CLU_011675_5_0_9"/>
<dbReference type="OrthoDB" id="9801107at2"/>
<dbReference type="UniPathway" id="UPA00159">
    <property type="reaction ID" value="UER00277"/>
</dbReference>
<dbReference type="PRO" id="PR:Q2FWD1"/>
<dbReference type="Proteomes" id="UP000008816">
    <property type="component" value="Chromosome"/>
</dbReference>
<dbReference type="GO" id="GO:0005829">
    <property type="term" value="C:cytosol"/>
    <property type="evidence" value="ECO:0000318"/>
    <property type="project" value="GO_Central"/>
</dbReference>
<dbReference type="GO" id="GO:0005524">
    <property type="term" value="F:ATP binding"/>
    <property type="evidence" value="ECO:0007669"/>
    <property type="project" value="UniProtKB-KW"/>
</dbReference>
<dbReference type="GO" id="GO:0003883">
    <property type="term" value="F:CTP synthase activity"/>
    <property type="evidence" value="ECO:0000318"/>
    <property type="project" value="GO_Central"/>
</dbReference>
<dbReference type="GO" id="GO:0004359">
    <property type="term" value="F:glutaminase activity"/>
    <property type="evidence" value="ECO:0007669"/>
    <property type="project" value="RHEA"/>
</dbReference>
<dbReference type="GO" id="GO:0042802">
    <property type="term" value="F:identical protein binding"/>
    <property type="evidence" value="ECO:0000318"/>
    <property type="project" value="GO_Central"/>
</dbReference>
<dbReference type="GO" id="GO:0046872">
    <property type="term" value="F:metal ion binding"/>
    <property type="evidence" value="ECO:0007669"/>
    <property type="project" value="UniProtKB-KW"/>
</dbReference>
<dbReference type="GO" id="GO:0044210">
    <property type="term" value="P:'de novo' CTP biosynthetic process"/>
    <property type="evidence" value="ECO:0007669"/>
    <property type="project" value="UniProtKB-UniRule"/>
</dbReference>
<dbReference type="GO" id="GO:0006241">
    <property type="term" value="P:CTP biosynthetic process"/>
    <property type="evidence" value="ECO:0000318"/>
    <property type="project" value="GO_Central"/>
</dbReference>
<dbReference type="GO" id="GO:0019856">
    <property type="term" value="P:pyrimidine nucleobase biosynthetic process"/>
    <property type="evidence" value="ECO:0000318"/>
    <property type="project" value="GO_Central"/>
</dbReference>
<dbReference type="CDD" id="cd03113">
    <property type="entry name" value="CTPS_N"/>
    <property type="match status" value="1"/>
</dbReference>
<dbReference type="CDD" id="cd01746">
    <property type="entry name" value="GATase1_CTP_Synthase"/>
    <property type="match status" value="1"/>
</dbReference>
<dbReference type="FunFam" id="3.40.50.300:FF:000009">
    <property type="entry name" value="CTP synthase"/>
    <property type="match status" value="1"/>
</dbReference>
<dbReference type="FunFam" id="3.40.50.880:FF:000002">
    <property type="entry name" value="CTP synthase"/>
    <property type="match status" value="1"/>
</dbReference>
<dbReference type="Gene3D" id="3.40.50.880">
    <property type="match status" value="1"/>
</dbReference>
<dbReference type="Gene3D" id="3.40.50.300">
    <property type="entry name" value="P-loop containing nucleotide triphosphate hydrolases"/>
    <property type="match status" value="1"/>
</dbReference>
<dbReference type="HAMAP" id="MF_01227">
    <property type="entry name" value="PyrG"/>
    <property type="match status" value="1"/>
</dbReference>
<dbReference type="InterPro" id="IPR029062">
    <property type="entry name" value="Class_I_gatase-like"/>
</dbReference>
<dbReference type="InterPro" id="IPR004468">
    <property type="entry name" value="CTP_synthase"/>
</dbReference>
<dbReference type="InterPro" id="IPR017456">
    <property type="entry name" value="CTP_synthase_N"/>
</dbReference>
<dbReference type="InterPro" id="IPR017926">
    <property type="entry name" value="GATASE"/>
</dbReference>
<dbReference type="InterPro" id="IPR033828">
    <property type="entry name" value="GATase1_CTP_Synthase"/>
</dbReference>
<dbReference type="InterPro" id="IPR027417">
    <property type="entry name" value="P-loop_NTPase"/>
</dbReference>
<dbReference type="NCBIfam" id="NF003792">
    <property type="entry name" value="PRK05380.1"/>
    <property type="match status" value="1"/>
</dbReference>
<dbReference type="NCBIfam" id="TIGR00337">
    <property type="entry name" value="PyrG"/>
    <property type="match status" value="1"/>
</dbReference>
<dbReference type="PANTHER" id="PTHR11550">
    <property type="entry name" value="CTP SYNTHASE"/>
    <property type="match status" value="1"/>
</dbReference>
<dbReference type="PANTHER" id="PTHR11550:SF0">
    <property type="entry name" value="CTP SYNTHASE-RELATED"/>
    <property type="match status" value="1"/>
</dbReference>
<dbReference type="Pfam" id="PF06418">
    <property type="entry name" value="CTP_synth_N"/>
    <property type="match status" value="1"/>
</dbReference>
<dbReference type="Pfam" id="PF00117">
    <property type="entry name" value="GATase"/>
    <property type="match status" value="1"/>
</dbReference>
<dbReference type="SUPFAM" id="SSF52317">
    <property type="entry name" value="Class I glutamine amidotransferase-like"/>
    <property type="match status" value="1"/>
</dbReference>
<dbReference type="SUPFAM" id="SSF52540">
    <property type="entry name" value="P-loop containing nucleoside triphosphate hydrolases"/>
    <property type="match status" value="1"/>
</dbReference>
<dbReference type="PROSITE" id="PS51273">
    <property type="entry name" value="GATASE_TYPE_1"/>
    <property type="match status" value="1"/>
</dbReference>
<reference key="1">
    <citation type="book" date="2006" name="Gram positive pathogens, 2nd edition">
        <title>The Staphylococcus aureus NCTC 8325 genome.</title>
        <editorList>
            <person name="Fischetti V."/>
            <person name="Novick R."/>
            <person name="Ferretti J."/>
            <person name="Portnoy D."/>
            <person name="Rood J."/>
        </editorList>
        <authorList>
            <person name="Gillaspy A.F."/>
            <person name="Worrell V."/>
            <person name="Orvis J."/>
            <person name="Roe B.A."/>
            <person name="Dyer D.W."/>
            <person name="Iandolo J.J."/>
        </authorList>
    </citation>
    <scope>NUCLEOTIDE SEQUENCE [LARGE SCALE GENOMIC DNA]</scope>
    <source>
        <strain>NCTC 8325 / PS 47</strain>
    </source>
</reference>
<comment type="function">
    <text evidence="1">Catalyzes the ATP-dependent amination of UTP to CTP with either L-glutamine or ammonia as the source of nitrogen. Regulates intracellular CTP levels through interactions with the four ribonucleotide triphosphates.</text>
</comment>
<comment type="catalytic activity">
    <reaction evidence="1">
        <text>UTP + L-glutamine + ATP + H2O = CTP + L-glutamate + ADP + phosphate + 2 H(+)</text>
        <dbReference type="Rhea" id="RHEA:26426"/>
        <dbReference type="ChEBI" id="CHEBI:15377"/>
        <dbReference type="ChEBI" id="CHEBI:15378"/>
        <dbReference type="ChEBI" id="CHEBI:29985"/>
        <dbReference type="ChEBI" id="CHEBI:30616"/>
        <dbReference type="ChEBI" id="CHEBI:37563"/>
        <dbReference type="ChEBI" id="CHEBI:43474"/>
        <dbReference type="ChEBI" id="CHEBI:46398"/>
        <dbReference type="ChEBI" id="CHEBI:58359"/>
        <dbReference type="ChEBI" id="CHEBI:456216"/>
        <dbReference type="EC" id="6.3.4.2"/>
    </reaction>
</comment>
<comment type="catalytic activity">
    <reaction evidence="1">
        <text>L-glutamine + H2O = L-glutamate + NH4(+)</text>
        <dbReference type="Rhea" id="RHEA:15889"/>
        <dbReference type="ChEBI" id="CHEBI:15377"/>
        <dbReference type="ChEBI" id="CHEBI:28938"/>
        <dbReference type="ChEBI" id="CHEBI:29985"/>
        <dbReference type="ChEBI" id="CHEBI:58359"/>
    </reaction>
</comment>
<comment type="catalytic activity">
    <reaction evidence="1">
        <text>UTP + NH4(+) + ATP = CTP + ADP + phosphate + 2 H(+)</text>
        <dbReference type="Rhea" id="RHEA:16597"/>
        <dbReference type="ChEBI" id="CHEBI:15378"/>
        <dbReference type="ChEBI" id="CHEBI:28938"/>
        <dbReference type="ChEBI" id="CHEBI:30616"/>
        <dbReference type="ChEBI" id="CHEBI:37563"/>
        <dbReference type="ChEBI" id="CHEBI:43474"/>
        <dbReference type="ChEBI" id="CHEBI:46398"/>
        <dbReference type="ChEBI" id="CHEBI:456216"/>
    </reaction>
</comment>
<comment type="activity regulation">
    <text evidence="1">Allosterically activated by GTP, when glutamine is the substrate; GTP has no effect on the reaction when ammonia is the substrate. The allosteric effector GTP functions by stabilizing the protein conformation that binds the tetrahedral intermediate(s) formed during glutamine hydrolysis. Inhibited by the product CTP, via allosteric rather than competitive inhibition.</text>
</comment>
<comment type="pathway">
    <text evidence="1">Pyrimidine metabolism; CTP biosynthesis via de novo pathway; CTP from UDP: step 2/2.</text>
</comment>
<comment type="subunit">
    <text evidence="1">Homotetramer.</text>
</comment>
<comment type="miscellaneous">
    <text evidence="1">CTPSs have evolved a hybrid strategy for distinguishing between UTP and CTP. The overlapping regions of the product feedback inhibitory and substrate sites recognize a common feature in both compounds, the triphosphate moiety. To differentiate isosteric substrate and product pyrimidine rings, an additional pocket far from the expected kinase/ligase catalytic site, specifically recognizes the cytosine and ribose portions of the product inhibitor.</text>
</comment>
<comment type="similarity">
    <text evidence="1">Belongs to the CTP synthase family.</text>
</comment>
<name>PYRG_STAA8</name>
<sequence length="536" mass="59982">MTKFIFVTGGVVSSLGKGITASSLGRLLKDRGLNVTIQKFDPYLNVDPGTMSPYQHGEVFVTDDGAETDLDLGHYERFIDINLNKFSNVTAGKVYSHVLKKERRGDYLGGTVQVIPHITNEIKERLLLAGESTNADVVITEIGGTTGDIESLPFIEAIRQIRSDLGRENVMYVHCTLLPYIKAAGEMKTKPTQHSVKELRGLGIQPDLIVVRTEYEMTQDLKDKIALFCDINKESVIECRDADSLYEIPLQLSQQNMDDIVIKRLQLNAKYETQLDEWKQLLDIVNNLDGKITIGLVGKYVSLQDAYLSVVESLKHAGYPFAKDIDIRWIDSSEVTDENAAEYLADVDGILVPGGFGFRASEGKISAIKYARENNVPFFGICLGMQLATVEFSRNVLGLEGAHSAELDPATPYPIIDLLPEQKDIEDLGGTLRLGLYSCSIKEGTLAQDVYGKAEIEERHRHRYEFNNDYREQLEANGMVISGTSPDGRLVEMVEIPTNDFFIACQFHPEFLSRPNRPHPIFKSFIEASLKYQQNK</sequence>
<proteinExistence type="inferred from homology"/>
<evidence type="ECO:0000255" key="1">
    <source>
        <dbReference type="HAMAP-Rule" id="MF_01227"/>
    </source>
</evidence>
<gene>
    <name evidence="1" type="primary">pyrG</name>
    <name type="ordered locus">SAOUHSC_02368</name>
</gene>
<keyword id="KW-0067">ATP-binding</keyword>
<keyword id="KW-0315">Glutamine amidotransferase</keyword>
<keyword id="KW-0436">Ligase</keyword>
<keyword id="KW-0460">Magnesium</keyword>
<keyword id="KW-0479">Metal-binding</keyword>
<keyword id="KW-0547">Nucleotide-binding</keyword>
<keyword id="KW-0665">Pyrimidine biosynthesis</keyword>
<keyword id="KW-1185">Reference proteome</keyword>
<protein>
    <recommendedName>
        <fullName evidence="1">CTP synthase</fullName>
        <ecNumber evidence="1">6.3.4.2</ecNumber>
    </recommendedName>
    <alternativeName>
        <fullName evidence="1">Cytidine 5'-triphosphate synthase</fullName>
    </alternativeName>
    <alternativeName>
        <fullName evidence="1">Cytidine triphosphate synthetase</fullName>
        <shortName evidence="1">CTP synthetase</shortName>
        <shortName evidence="1">CTPS</shortName>
    </alternativeName>
    <alternativeName>
        <fullName evidence="1">UTP--ammonia ligase</fullName>
    </alternativeName>
</protein>